<reference key="1">
    <citation type="journal article" date="2008" name="Appl. Environ. Microbiol.">
        <title>Genome of the epsilonproteobacterial chemolithoautotroph Sulfurimonas denitrificans.</title>
        <authorList>
            <person name="Sievert S.M."/>
            <person name="Scott K.M."/>
            <person name="Klotz M.G."/>
            <person name="Chain P.S.G."/>
            <person name="Hauser L.J."/>
            <person name="Hemp J."/>
            <person name="Huegler M."/>
            <person name="Land M."/>
            <person name="Lapidus A."/>
            <person name="Larimer F.W."/>
            <person name="Lucas S."/>
            <person name="Malfatti S.A."/>
            <person name="Meyer F."/>
            <person name="Paulsen I.T."/>
            <person name="Ren Q."/>
            <person name="Simon J."/>
            <person name="Bailey K."/>
            <person name="Diaz E."/>
            <person name="Fitzpatrick K.A."/>
            <person name="Glover B."/>
            <person name="Gwatney N."/>
            <person name="Korajkic A."/>
            <person name="Long A."/>
            <person name="Mobberley J.M."/>
            <person name="Pantry S.N."/>
            <person name="Pazder G."/>
            <person name="Peterson S."/>
            <person name="Quintanilla J.D."/>
            <person name="Sprinkle R."/>
            <person name="Stephens J."/>
            <person name="Thomas P."/>
            <person name="Vaughn R."/>
            <person name="Weber M.J."/>
            <person name="Wooten L.L."/>
        </authorList>
    </citation>
    <scope>NUCLEOTIDE SEQUENCE [LARGE SCALE GENOMIC DNA]</scope>
    <source>
        <strain>ATCC 33889 / DSM 1251</strain>
    </source>
</reference>
<organism>
    <name type="scientific">Sulfurimonas denitrificans (strain ATCC 33889 / DSM 1251)</name>
    <name type="common">Thiomicrospira denitrificans (strain ATCC 33889 / DSM 1251)</name>
    <dbReference type="NCBI Taxonomy" id="326298"/>
    <lineage>
        <taxon>Bacteria</taxon>
        <taxon>Pseudomonadati</taxon>
        <taxon>Campylobacterota</taxon>
        <taxon>Epsilonproteobacteria</taxon>
        <taxon>Campylobacterales</taxon>
        <taxon>Sulfurimonadaceae</taxon>
        <taxon>Sulfurimonas</taxon>
    </lineage>
</organism>
<dbReference type="EC" id="1.3.5.2" evidence="1"/>
<dbReference type="EMBL" id="CP000153">
    <property type="protein sequence ID" value="ABB44502.1"/>
    <property type="molecule type" value="Genomic_DNA"/>
</dbReference>
<dbReference type="RefSeq" id="WP_011372854.1">
    <property type="nucleotide sequence ID" value="NC_007575.1"/>
</dbReference>
<dbReference type="SMR" id="Q30R79"/>
<dbReference type="STRING" id="326298.Suden_1224"/>
<dbReference type="KEGG" id="tdn:Suden_1224"/>
<dbReference type="eggNOG" id="COG0167">
    <property type="taxonomic scope" value="Bacteria"/>
</dbReference>
<dbReference type="HOGENOM" id="CLU_013640_2_0_7"/>
<dbReference type="OrthoDB" id="9802377at2"/>
<dbReference type="UniPathway" id="UPA00070">
    <property type="reaction ID" value="UER00946"/>
</dbReference>
<dbReference type="Proteomes" id="UP000002714">
    <property type="component" value="Chromosome"/>
</dbReference>
<dbReference type="GO" id="GO:0005737">
    <property type="term" value="C:cytoplasm"/>
    <property type="evidence" value="ECO:0007669"/>
    <property type="project" value="InterPro"/>
</dbReference>
<dbReference type="GO" id="GO:0005886">
    <property type="term" value="C:plasma membrane"/>
    <property type="evidence" value="ECO:0007669"/>
    <property type="project" value="UniProtKB-SubCell"/>
</dbReference>
<dbReference type="GO" id="GO:0106430">
    <property type="term" value="F:dihydroorotate dehydrogenase (quinone) activity"/>
    <property type="evidence" value="ECO:0007669"/>
    <property type="project" value="UniProtKB-EC"/>
</dbReference>
<dbReference type="GO" id="GO:0006207">
    <property type="term" value="P:'de novo' pyrimidine nucleobase biosynthetic process"/>
    <property type="evidence" value="ECO:0007669"/>
    <property type="project" value="InterPro"/>
</dbReference>
<dbReference type="GO" id="GO:0044205">
    <property type="term" value="P:'de novo' UMP biosynthetic process"/>
    <property type="evidence" value="ECO:0007669"/>
    <property type="project" value="UniProtKB-UniRule"/>
</dbReference>
<dbReference type="CDD" id="cd04738">
    <property type="entry name" value="DHOD_2_like"/>
    <property type="match status" value="1"/>
</dbReference>
<dbReference type="Gene3D" id="3.20.20.70">
    <property type="entry name" value="Aldolase class I"/>
    <property type="match status" value="1"/>
</dbReference>
<dbReference type="HAMAP" id="MF_00225">
    <property type="entry name" value="DHO_dh_type2"/>
    <property type="match status" value="1"/>
</dbReference>
<dbReference type="InterPro" id="IPR013785">
    <property type="entry name" value="Aldolase_TIM"/>
</dbReference>
<dbReference type="InterPro" id="IPR050074">
    <property type="entry name" value="DHO_dehydrogenase"/>
</dbReference>
<dbReference type="InterPro" id="IPR012135">
    <property type="entry name" value="Dihydroorotate_DH_1_2"/>
</dbReference>
<dbReference type="InterPro" id="IPR005719">
    <property type="entry name" value="Dihydroorotate_DH_2"/>
</dbReference>
<dbReference type="InterPro" id="IPR005720">
    <property type="entry name" value="Dihydroorotate_DH_cat"/>
</dbReference>
<dbReference type="InterPro" id="IPR001295">
    <property type="entry name" value="Dihydroorotate_DH_CS"/>
</dbReference>
<dbReference type="NCBIfam" id="NF003645">
    <property type="entry name" value="PRK05286.1-2"/>
    <property type="match status" value="1"/>
</dbReference>
<dbReference type="NCBIfam" id="NF003649">
    <property type="entry name" value="PRK05286.2-2"/>
    <property type="match status" value="1"/>
</dbReference>
<dbReference type="NCBIfam" id="NF003652">
    <property type="entry name" value="PRK05286.2-5"/>
    <property type="match status" value="1"/>
</dbReference>
<dbReference type="NCBIfam" id="TIGR01036">
    <property type="entry name" value="pyrD_sub2"/>
    <property type="match status" value="1"/>
</dbReference>
<dbReference type="PANTHER" id="PTHR48109:SF4">
    <property type="entry name" value="DIHYDROOROTATE DEHYDROGENASE (QUINONE), MITOCHONDRIAL"/>
    <property type="match status" value="1"/>
</dbReference>
<dbReference type="PANTHER" id="PTHR48109">
    <property type="entry name" value="DIHYDROOROTATE DEHYDROGENASE (QUINONE), MITOCHONDRIAL-RELATED"/>
    <property type="match status" value="1"/>
</dbReference>
<dbReference type="Pfam" id="PF01180">
    <property type="entry name" value="DHO_dh"/>
    <property type="match status" value="1"/>
</dbReference>
<dbReference type="PIRSF" id="PIRSF000164">
    <property type="entry name" value="DHO_oxidase"/>
    <property type="match status" value="1"/>
</dbReference>
<dbReference type="SUPFAM" id="SSF51395">
    <property type="entry name" value="FMN-linked oxidoreductases"/>
    <property type="match status" value="1"/>
</dbReference>
<dbReference type="PROSITE" id="PS00911">
    <property type="entry name" value="DHODEHASE_1"/>
    <property type="match status" value="1"/>
</dbReference>
<dbReference type="PROSITE" id="PS00912">
    <property type="entry name" value="DHODEHASE_2"/>
    <property type="match status" value="1"/>
</dbReference>
<evidence type="ECO:0000255" key="1">
    <source>
        <dbReference type="HAMAP-Rule" id="MF_00225"/>
    </source>
</evidence>
<comment type="function">
    <text evidence="1">Catalyzes the conversion of dihydroorotate to orotate with quinone as electron acceptor.</text>
</comment>
<comment type="catalytic activity">
    <reaction evidence="1">
        <text>(S)-dihydroorotate + a quinone = orotate + a quinol</text>
        <dbReference type="Rhea" id="RHEA:30187"/>
        <dbReference type="ChEBI" id="CHEBI:24646"/>
        <dbReference type="ChEBI" id="CHEBI:30839"/>
        <dbReference type="ChEBI" id="CHEBI:30864"/>
        <dbReference type="ChEBI" id="CHEBI:132124"/>
        <dbReference type="EC" id="1.3.5.2"/>
    </reaction>
</comment>
<comment type="cofactor">
    <cofactor evidence="1">
        <name>FMN</name>
        <dbReference type="ChEBI" id="CHEBI:58210"/>
    </cofactor>
    <text evidence="1">Binds 1 FMN per subunit.</text>
</comment>
<comment type="pathway">
    <text evidence="1">Pyrimidine metabolism; UMP biosynthesis via de novo pathway; orotate from (S)-dihydroorotate (quinone route): step 1/1.</text>
</comment>
<comment type="subunit">
    <text evidence="1">Monomer.</text>
</comment>
<comment type="subcellular location">
    <subcellularLocation>
        <location evidence="1">Cell membrane</location>
        <topology evidence="1">Peripheral membrane protein</topology>
    </subcellularLocation>
</comment>
<comment type="similarity">
    <text evidence="1">Belongs to the dihydroorotate dehydrogenase family. Type 2 subfamily.</text>
</comment>
<name>PYRD_SULDN</name>
<feature type="chain" id="PRO_0000336493" description="Dihydroorotate dehydrogenase (quinone)">
    <location>
        <begin position="1"/>
        <end position="352"/>
    </location>
</feature>
<feature type="active site" description="Nucleophile" evidence="1">
    <location>
        <position position="182"/>
    </location>
</feature>
<feature type="binding site" evidence="1">
    <location>
        <begin position="68"/>
        <end position="72"/>
    </location>
    <ligand>
        <name>FMN</name>
        <dbReference type="ChEBI" id="CHEBI:58210"/>
    </ligand>
</feature>
<feature type="binding site" evidence="1">
    <location>
        <position position="72"/>
    </location>
    <ligand>
        <name>substrate</name>
    </ligand>
</feature>
<feature type="binding site" evidence="1">
    <location>
        <position position="92"/>
    </location>
    <ligand>
        <name>FMN</name>
        <dbReference type="ChEBI" id="CHEBI:58210"/>
    </ligand>
</feature>
<feature type="binding site" evidence="1">
    <location>
        <begin position="117"/>
        <end position="121"/>
    </location>
    <ligand>
        <name>substrate</name>
    </ligand>
</feature>
<feature type="binding site" evidence="1">
    <location>
        <position position="146"/>
    </location>
    <ligand>
        <name>FMN</name>
        <dbReference type="ChEBI" id="CHEBI:58210"/>
    </ligand>
</feature>
<feature type="binding site" evidence="1">
    <location>
        <position position="179"/>
    </location>
    <ligand>
        <name>FMN</name>
        <dbReference type="ChEBI" id="CHEBI:58210"/>
    </ligand>
</feature>
<feature type="binding site" evidence="1">
    <location>
        <position position="179"/>
    </location>
    <ligand>
        <name>substrate</name>
    </ligand>
</feature>
<feature type="binding site" evidence="1">
    <location>
        <position position="184"/>
    </location>
    <ligand>
        <name>substrate</name>
    </ligand>
</feature>
<feature type="binding site" evidence="1">
    <location>
        <position position="215"/>
    </location>
    <ligand>
        <name>FMN</name>
        <dbReference type="ChEBI" id="CHEBI:58210"/>
    </ligand>
</feature>
<feature type="binding site" evidence="1">
    <location>
        <position position="243"/>
    </location>
    <ligand>
        <name>FMN</name>
        <dbReference type="ChEBI" id="CHEBI:58210"/>
    </ligand>
</feature>
<feature type="binding site" evidence="1">
    <location>
        <begin position="244"/>
        <end position="245"/>
    </location>
    <ligand>
        <name>substrate</name>
    </ligand>
</feature>
<feature type="binding site" evidence="1">
    <location>
        <position position="263"/>
    </location>
    <ligand>
        <name>FMN</name>
        <dbReference type="ChEBI" id="CHEBI:58210"/>
    </ligand>
</feature>
<feature type="binding site" evidence="1">
    <location>
        <position position="292"/>
    </location>
    <ligand>
        <name>FMN</name>
        <dbReference type="ChEBI" id="CHEBI:58210"/>
    </ligand>
</feature>
<feature type="binding site" evidence="1">
    <location>
        <begin position="313"/>
        <end position="314"/>
    </location>
    <ligand>
        <name>FMN</name>
        <dbReference type="ChEBI" id="CHEBI:58210"/>
    </ligand>
</feature>
<keyword id="KW-1003">Cell membrane</keyword>
<keyword id="KW-0285">Flavoprotein</keyword>
<keyword id="KW-0288">FMN</keyword>
<keyword id="KW-0472">Membrane</keyword>
<keyword id="KW-0560">Oxidoreductase</keyword>
<keyword id="KW-0665">Pyrimidine biosynthesis</keyword>
<keyword id="KW-1185">Reference proteome</keyword>
<accession>Q30R79</accession>
<sequence>MINYQSIKPWLFKLEPEDAHMLAEAALRIPNVCQVAFNPFLESHFITNSILKQELFGRTFFNPIGLGAGFDKNATMIRAMQILGFGFTEIGTITPKAQAGNPKPRMFRHIEEQSIQNAMGFNNEGLLSAQKRLKKRFPFTTPIGINIGKNKLTPDTQAINDYTTLIKALHELGDYLVINISSPNTPGLRDLQNEEFITKLFEESKAITSKPILLKIAPDMSKEDAVALTKLAVLKGADGIIATNTTVDYSLVKEPKSIGGLSGAVLKEKSFEIFEAVAKELYGKTTLISVGGISSAKEVYRRIKAGASLVQIYSGLIYEGPDLIKNINNELTELIKADGYTNITQAIGADRK</sequence>
<gene>
    <name evidence="1" type="primary">pyrD</name>
    <name type="ordered locus">Suden_1224</name>
</gene>
<protein>
    <recommendedName>
        <fullName evidence="1">Dihydroorotate dehydrogenase (quinone)</fullName>
        <ecNumber evidence="1">1.3.5.2</ecNumber>
    </recommendedName>
    <alternativeName>
        <fullName evidence="1">DHOdehase</fullName>
        <shortName evidence="1">DHOD</shortName>
        <shortName evidence="1">DHODase</shortName>
    </alternativeName>
    <alternativeName>
        <fullName evidence="1">Dihydroorotate oxidase</fullName>
    </alternativeName>
</protein>
<proteinExistence type="inferred from homology"/>